<proteinExistence type="inferred from homology"/>
<keyword id="KW-0520">NAD</keyword>
<keyword id="KW-0560">Oxidoreductase</keyword>
<keyword id="KW-0816">Tricarboxylic acid cycle</keyword>
<dbReference type="EC" id="1.1.1.37" evidence="1"/>
<dbReference type="EMBL" id="CP000446">
    <property type="protein sequence ID" value="ABI40405.1"/>
    <property type="molecule type" value="Genomic_DNA"/>
</dbReference>
<dbReference type="RefSeq" id="WP_011624072.1">
    <property type="nucleotide sequence ID" value="NC_008321.1"/>
</dbReference>
<dbReference type="SMR" id="Q0HEW2"/>
<dbReference type="KEGG" id="she:Shewmr4_3339"/>
<dbReference type="HOGENOM" id="CLU_047181_1_0_6"/>
<dbReference type="GO" id="GO:0005737">
    <property type="term" value="C:cytoplasm"/>
    <property type="evidence" value="ECO:0007669"/>
    <property type="project" value="TreeGrafter"/>
</dbReference>
<dbReference type="GO" id="GO:0030060">
    <property type="term" value="F:L-malate dehydrogenase (NAD+) activity"/>
    <property type="evidence" value="ECO:0007669"/>
    <property type="project" value="UniProtKB-UniRule"/>
</dbReference>
<dbReference type="GO" id="GO:0006108">
    <property type="term" value="P:malate metabolic process"/>
    <property type="evidence" value="ECO:0007669"/>
    <property type="project" value="InterPro"/>
</dbReference>
<dbReference type="GO" id="GO:0006099">
    <property type="term" value="P:tricarboxylic acid cycle"/>
    <property type="evidence" value="ECO:0007669"/>
    <property type="project" value="UniProtKB-UniRule"/>
</dbReference>
<dbReference type="CDD" id="cd01337">
    <property type="entry name" value="MDH_glyoxysomal_mitochondrial"/>
    <property type="match status" value="1"/>
</dbReference>
<dbReference type="FunFam" id="3.40.50.720:FF:000017">
    <property type="entry name" value="Malate dehydrogenase"/>
    <property type="match status" value="1"/>
</dbReference>
<dbReference type="FunFam" id="3.90.110.10:FF:000001">
    <property type="entry name" value="Malate dehydrogenase"/>
    <property type="match status" value="1"/>
</dbReference>
<dbReference type="Gene3D" id="3.90.110.10">
    <property type="entry name" value="Lactate dehydrogenase/glycoside hydrolase, family 4, C-terminal"/>
    <property type="match status" value="1"/>
</dbReference>
<dbReference type="Gene3D" id="3.40.50.720">
    <property type="entry name" value="NAD(P)-binding Rossmann-like Domain"/>
    <property type="match status" value="1"/>
</dbReference>
<dbReference type="HAMAP" id="MF_01516">
    <property type="entry name" value="Malate_dehydrog_1"/>
    <property type="match status" value="1"/>
</dbReference>
<dbReference type="InterPro" id="IPR001557">
    <property type="entry name" value="L-lactate/malate_DH"/>
</dbReference>
<dbReference type="InterPro" id="IPR022383">
    <property type="entry name" value="Lactate/malate_DH_C"/>
</dbReference>
<dbReference type="InterPro" id="IPR001236">
    <property type="entry name" value="Lactate/malate_DH_N"/>
</dbReference>
<dbReference type="InterPro" id="IPR015955">
    <property type="entry name" value="Lactate_DH/Glyco_Ohase_4_C"/>
</dbReference>
<dbReference type="InterPro" id="IPR001252">
    <property type="entry name" value="Malate_DH_AS"/>
</dbReference>
<dbReference type="InterPro" id="IPR010097">
    <property type="entry name" value="Malate_DH_type1"/>
</dbReference>
<dbReference type="InterPro" id="IPR023958">
    <property type="entry name" value="Malate_DH_type1_bac"/>
</dbReference>
<dbReference type="InterPro" id="IPR036291">
    <property type="entry name" value="NAD(P)-bd_dom_sf"/>
</dbReference>
<dbReference type="NCBIfam" id="TIGR01772">
    <property type="entry name" value="MDH_euk_gproteo"/>
    <property type="match status" value="1"/>
</dbReference>
<dbReference type="PANTHER" id="PTHR11540">
    <property type="entry name" value="MALATE AND LACTATE DEHYDROGENASE"/>
    <property type="match status" value="1"/>
</dbReference>
<dbReference type="PANTHER" id="PTHR11540:SF16">
    <property type="entry name" value="MALATE DEHYDROGENASE, MITOCHONDRIAL"/>
    <property type="match status" value="1"/>
</dbReference>
<dbReference type="Pfam" id="PF02866">
    <property type="entry name" value="Ldh_1_C"/>
    <property type="match status" value="1"/>
</dbReference>
<dbReference type="Pfam" id="PF00056">
    <property type="entry name" value="Ldh_1_N"/>
    <property type="match status" value="1"/>
</dbReference>
<dbReference type="PIRSF" id="PIRSF000102">
    <property type="entry name" value="Lac_mal_DH"/>
    <property type="match status" value="1"/>
</dbReference>
<dbReference type="SUPFAM" id="SSF56327">
    <property type="entry name" value="LDH C-terminal domain-like"/>
    <property type="match status" value="1"/>
</dbReference>
<dbReference type="SUPFAM" id="SSF51735">
    <property type="entry name" value="NAD(P)-binding Rossmann-fold domains"/>
    <property type="match status" value="1"/>
</dbReference>
<dbReference type="PROSITE" id="PS00068">
    <property type="entry name" value="MDH"/>
    <property type="match status" value="1"/>
</dbReference>
<accession>Q0HEW2</accession>
<protein>
    <recommendedName>
        <fullName evidence="1">Malate dehydrogenase</fullName>
        <ecNumber evidence="1">1.1.1.37</ecNumber>
    </recommendedName>
</protein>
<name>MDH_SHESM</name>
<feature type="chain" id="PRO_0000294305" description="Malate dehydrogenase">
    <location>
        <begin position="1"/>
        <end position="311"/>
    </location>
</feature>
<feature type="active site" description="Proton acceptor" evidence="1">
    <location>
        <position position="177"/>
    </location>
</feature>
<feature type="binding site" evidence="1">
    <location>
        <begin position="7"/>
        <end position="13"/>
    </location>
    <ligand>
        <name>NAD(+)</name>
        <dbReference type="ChEBI" id="CHEBI:57540"/>
    </ligand>
</feature>
<feature type="binding site" evidence="1">
    <location>
        <position position="34"/>
    </location>
    <ligand>
        <name>NAD(+)</name>
        <dbReference type="ChEBI" id="CHEBI:57540"/>
    </ligand>
</feature>
<feature type="binding site" evidence="1">
    <location>
        <position position="81"/>
    </location>
    <ligand>
        <name>substrate</name>
    </ligand>
</feature>
<feature type="binding site" evidence="1">
    <location>
        <position position="87"/>
    </location>
    <ligand>
        <name>substrate</name>
    </ligand>
</feature>
<feature type="binding site" evidence="1">
    <location>
        <position position="94"/>
    </location>
    <ligand>
        <name>NAD(+)</name>
        <dbReference type="ChEBI" id="CHEBI:57540"/>
    </ligand>
</feature>
<feature type="binding site" evidence="1">
    <location>
        <begin position="117"/>
        <end position="119"/>
    </location>
    <ligand>
        <name>NAD(+)</name>
        <dbReference type="ChEBI" id="CHEBI:57540"/>
    </ligand>
</feature>
<feature type="binding site" evidence="1">
    <location>
        <position position="119"/>
    </location>
    <ligand>
        <name>substrate</name>
    </ligand>
</feature>
<feature type="binding site" evidence="1">
    <location>
        <position position="153"/>
    </location>
    <ligand>
        <name>substrate</name>
    </ligand>
</feature>
<feature type="binding site" evidence="1">
    <location>
        <position position="227"/>
    </location>
    <ligand>
        <name>NAD(+)</name>
        <dbReference type="ChEBI" id="CHEBI:57540"/>
    </ligand>
</feature>
<comment type="function">
    <text evidence="1">Catalyzes the reversible oxidation of malate to oxaloacetate.</text>
</comment>
<comment type="catalytic activity">
    <reaction evidence="1">
        <text>(S)-malate + NAD(+) = oxaloacetate + NADH + H(+)</text>
        <dbReference type="Rhea" id="RHEA:21432"/>
        <dbReference type="ChEBI" id="CHEBI:15378"/>
        <dbReference type="ChEBI" id="CHEBI:15589"/>
        <dbReference type="ChEBI" id="CHEBI:16452"/>
        <dbReference type="ChEBI" id="CHEBI:57540"/>
        <dbReference type="ChEBI" id="CHEBI:57945"/>
        <dbReference type="EC" id="1.1.1.37"/>
    </reaction>
</comment>
<comment type="subunit">
    <text evidence="1">Homodimer.</text>
</comment>
<comment type="similarity">
    <text evidence="1">Belongs to the LDH/MDH superfamily. MDH type 1 family.</text>
</comment>
<sequence length="311" mass="32119">MKVAVLGAAGGIGQALALLLKTQLPAGSQLSLYDIAPVTPGVAVDLSHIPTAVEIKGFAGEDPTPALVGADVVLISAGVARKPGMDRSDLFNINAGIVRNLIEKVAVTCPKALVGIITNPVNTTVAIAAEVLKKAGVYDKNRLFGVTTLDVIRSETFIAELKGLNVADVKVNVIGGHSGVTILPLLSQVEGVTFSDEEVASLTKRIQNAGTEVVEAKAGGGSATLSMGQAACRFGMSLVRGLQGEANIVECAYVDGGSEHAEFFAQPVLLGKNGIEKVLPYGEVSAFEANARDSMLDTLKGDIKLGVDFVK</sequence>
<organism>
    <name type="scientific">Shewanella sp. (strain MR-4)</name>
    <dbReference type="NCBI Taxonomy" id="60480"/>
    <lineage>
        <taxon>Bacteria</taxon>
        <taxon>Pseudomonadati</taxon>
        <taxon>Pseudomonadota</taxon>
        <taxon>Gammaproteobacteria</taxon>
        <taxon>Alteromonadales</taxon>
        <taxon>Shewanellaceae</taxon>
        <taxon>Shewanella</taxon>
    </lineage>
</organism>
<gene>
    <name evidence="1" type="primary">mdh</name>
    <name type="ordered locus">Shewmr4_3339</name>
</gene>
<evidence type="ECO:0000255" key="1">
    <source>
        <dbReference type="HAMAP-Rule" id="MF_01516"/>
    </source>
</evidence>
<reference key="1">
    <citation type="submission" date="2006-08" db="EMBL/GenBank/DDBJ databases">
        <title>Complete sequence of Shewanella sp. MR-4.</title>
        <authorList>
            <consortium name="US DOE Joint Genome Institute"/>
            <person name="Copeland A."/>
            <person name="Lucas S."/>
            <person name="Lapidus A."/>
            <person name="Barry K."/>
            <person name="Detter J.C."/>
            <person name="Glavina del Rio T."/>
            <person name="Hammon N."/>
            <person name="Israni S."/>
            <person name="Dalin E."/>
            <person name="Tice H."/>
            <person name="Pitluck S."/>
            <person name="Kiss H."/>
            <person name="Brettin T."/>
            <person name="Bruce D."/>
            <person name="Han C."/>
            <person name="Tapia R."/>
            <person name="Gilna P."/>
            <person name="Schmutz J."/>
            <person name="Larimer F."/>
            <person name="Land M."/>
            <person name="Hauser L."/>
            <person name="Kyrpides N."/>
            <person name="Mikhailova N."/>
            <person name="Nealson K."/>
            <person name="Konstantinidis K."/>
            <person name="Klappenbach J."/>
            <person name="Tiedje J."/>
            <person name="Richardson P."/>
        </authorList>
    </citation>
    <scope>NUCLEOTIDE SEQUENCE [LARGE SCALE GENOMIC DNA]</scope>
    <source>
        <strain>MR-4</strain>
    </source>
</reference>